<organism>
    <name type="scientific">Shigella sonnei (strain Ss046)</name>
    <dbReference type="NCBI Taxonomy" id="300269"/>
    <lineage>
        <taxon>Bacteria</taxon>
        <taxon>Pseudomonadati</taxon>
        <taxon>Pseudomonadota</taxon>
        <taxon>Gammaproteobacteria</taxon>
        <taxon>Enterobacterales</taxon>
        <taxon>Enterobacteriaceae</taxon>
        <taxon>Shigella</taxon>
    </lineage>
</organism>
<keyword id="KW-0119">Carbohydrate metabolism</keyword>
<keyword id="KW-0413">Isomerase</keyword>
<keyword id="KW-0479">Metal-binding</keyword>
<keyword id="KW-1185">Reference proteome</keyword>
<keyword id="KW-0862">Zinc</keyword>
<sequence>MQKLKQQVFEANMDLPRYGLVTFTWGNVSAIDRERGLVVIKPSGVAYETMKADDMVVVDMSGKVVEGEYRPSSDTATYLELYRRYPSLGGIVHTHSTHATAWAQAGLAIPALGTTHADYFFGDIPCTRGLSEEEVQGEYELNTGKVIIETLGDAEPLHTPGIVVYQHGPFAWGKDAHDAVHNAVVMEEVAKMAWIARSINPQLNHIDSFLMNKHFMRKHGPNAYYGQK</sequence>
<protein>
    <recommendedName>
        <fullName evidence="1">L-ribulose-5-phosphate 4-epimerase UlaF</fullName>
        <ecNumber evidence="1">5.1.3.4</ecNumber>
    </recommendedName>
    <alternativeName>
        <fullName evidence="1">L-ascorbate utilization protein F</fullName>
    </alternativeName>
    <alternativeName>
        <fullName evidence="1">Phosphoribulose isomerase</fullName>
    </alternativeName>
</protein>
<feature type="chain" id="PRO_0000233250" description="L-ribulose-5-phosphate 4-epimerase UlaF">
    <location>
        <begin position="1"/>
        <end position="228"/>
    </location>
</feature>
<feature type="active site" description="Proton donor/acceptor" evidence="1">
    <location>
        <position position="118"/>
    </location>
</feature>
<feature type="active site" description="Proton donor/acceptor" evidence="1">
    <location>
        <position position="225"/>
    </location>
</feature>
<feature type="binding site" evidence="1">
    <location>
        <begin position="26"/>
        <end position="27"/>
    </location>
    <ligand>
        <name>substrate</name>
    </ligand>
</feature>
<feature type="binding site" evidence="1">
    <location>
        <begin position="43"/>
        <end position="44"/>
    </location>
    <ligand>
        <name>substrate</name>
    </ligand>
</feature>
<feature type="binding site" evidence="1">
    <location>
        <begin position="72"/>
        <end position="73"/>
    </location>
    <ligand>
        <name>substrate</name>
    </ligand>
</feature>
<feature type="binding site" evidence="1">
    <location>
        <position position="74"/>
    </location>
    <ligand>
        <name>Zn(2+)</name>
        <dbReference type="ChEBI" id="CHEBI:29105"/>
    </ligand>
</feature>
<feature type="binding site" evidence="1">
    <location>
        <position position="93"/>
    </location>
    <ligand>
        <name>Zn(2+)</name>
        <dbReference type="ChEBI" id="CHEBI:29105"/>
    </ligand>
</feature>
<feature type="binding site" evidence="1">
    <location>
        <position position="95"/>
    </location>
    <ligand>
        <name>Zn(2+)</name>
        <dbReference type="ChEBI" id="CHEBI:29105"/>
    </ligand>
</feature>
<feature type="binding site" evidence="1">
    <location>
        <position position="167"/>
    </location>
    <ligand>
        <name>Zn(2+)</name>
        <dbReference type="ChEBI" id="CHEBI:29105"/>
    </ligand>
</feature>
<proteinExistence type="inferred from homology"/>
<accession>Q3YUF0</accession>
<evidence type="ECO:0000255" key="1">
    <source>
        <dbReference type="HAMAP-Rule" id="MF_01952"/>
    </source>
</evidence>
<gene>
    <name evidence="1" type="primary">ulaF</name>
    <name type="ordered locus">SSON_4380</name>
</gene>
<reference key="1">
    <citation type="journal article" date="2005" name="Nucleic Acids Res.">
        <title>Genome dynamics and diversity of Shigella species, the etiologic agents of bacillary dysentery.</title>
        <authorList>
            <person name="Yang F."/>
            <person name="Yang J."/>
            <person name="Zhang X."/>
            <person name="Chen L."/>
            <person name="Jiang Y."/>
            <person name="Yan Y."/>
            <person name="Tang X."/>
            <person name="Wang J."/>
            <person name="Xiong Z."/>
            <person name="Dong J."/>
            <person name="Xue Y."/>
            <person name="Zhu Y."/>
            <person name="Xu X."/>
            <person name="Sun L."/>
            <person name="Chen S."/>
            <person name="Nie H."/>
            <person name="Peng J."/>
            <person name="Xu J."/>
            <person name="Wang Y."/>
            <person name="Yuan Z."/>
            <person name="Wen Y."/>
            <person name="Yao Z."/>
            <person name="Shen Y."/>
            <person name="Qiang B."/>
            <person name="Hou Y."/>
            <person name="Yu J."/>
            <person name="Jin Q."/>
        </authorList>
    </citation>
    <scope>NUCLEOTIDE SEQUENCE [LARGE SCALE GENOMIC DNA]</scope>
    <source>
        <strain>Ss046</strain>
    </source>
</reference>
<name>ULAF_SHISS</name>
<comment type="function">
    <text evidence="1">Catalyzes the isomerization of L-ribulose 5-phosphate to D-xylulose 5-phosphate. Is involved in the anaerobic L-ascorbate utilization.</text>
</comment>
<comment type="catalytic activity">
    <reaction evidence="1">
        <text>L-ribulose 5-phosphate = D-xylulose 5-phosphate</text>
        <dbReference type="Rhea" id="RHEA:22368"/>
        <dbReference type="ChEBI" id="CHEBI:57737"/>
        <dbReference type="ChEBI" id="CHEBI:58226"/>
        <dbReference type="EC" id="5.1.3.4"/>
    </reaction>
</comment>
<comment type="cofactor">
    <cofactor evidence="1">
        <name>Zn(2+)</name>
        <dbReference type="ChEBI" id="CHEBI:29105"/>
    </cofactor>
    <text evidence="1">Binds 1 zinc ion per subunit.</text>
</comment>
<comment type="pathway">
    <text evidence="1">Cofactor degradation; L-ascorbate degradation; D-xylulose 5-phosphate from L-ascorbate: step 4/4.</text>
</comment>
<comment type="induction">
    <text evidence="1">Induced by L-ascorbate. Repressed by UlaR.</text>
</comment>
<comment type="similarity">
    <text evidence="1">Belongs to the aldolase class II family. AraD/FucA subfamily.</text>
</comment>
<dbReference type="EC" id="5.1.3.4" evidence="1"/>
<dbReference type="EMBL" id="CP000038">
    <property type="protein sequence ID" value="AAZ90862.1"/>
    <property type="molecule type" value="Genomic_DNA"/>
</dbReference>
<dbReference type="RefSeq" id="WP_001170820.1">
    <property type="nucleotide sequence ID" value="NC_007384.1"/>
</dbReference>
<dbReference type="SMR" id="Q3YUF0"/>
<dbReference type="KEGG" id="ssn:SSON_4380"/>
<dbReference type="HOGENOM" id="CLU_006033_5_0_6"/>
<dbReference type="UniPathway" id="UPA00263">
    <property type="reaction ID" value="UER00380"/>
</dbReference>
<dbReference type="Proteomes" id="UP000002529">
    <property type="component" value="Chromosome"/>
</dbReference>
<dbReference type="GO" id="GO:0005829">
    <property type="term" value="C:cytosol"/>
    <property type="evidence" value="ECO:0007669"/>
    <property type="project" value="TreeGrafter"/>
</dbReference>
<dbReference type="GO" id="GO:0016832">
    <property type="term" value="F:aldehyde-lyase activity"/>
    <property type="evidence" value="ECO:0007669"/>
    <property type="project" value="TreeGrafter"/>
</dbReference>
<dbReference type="GO" id="GO:0008742">
    <property type="term" value="F:L-ribulose-phosphate 4-epimerase activity"/>
    <property type="evidence" value="ECO:0007669"/>
    <property type="project" value="UniProtKB-UniRule"/>
</dbReference>
<dbReference type="GO" id="GO:0008270">
    <property type="term" value="F:zinc ion binding"/>
    <property type="evidence" value="ECO:0007669"/>
    <property type="project" value="UniProtKB-UniRule"/>
</dbReference>
<dbReference type="GO" id="GO:0019854">
    <property type="term" value="P:L-ascorbic acid catabolic process"/>
    <property type="evidence" value="ECO:0007669"/>
    <property type="project" value="UniProtKB-UniRule"/>
</dbReference>
<dbReference type="GO" id="GO:0019323">
    <property type="term" value="P:pentose catabolic process"/>
    <property type="evidence" value="ECO:0007669"/>
    <property type="project" value="TreeGrafter"/>
</dbReference>
<dbReference type="CDD" id="cd00398">
    <property type="entry name" value="Aldolase_II"/>
    <property type="match status" value="1"/>
</dbReference>
<dbReference type="FunFam" id="3.40.225.10:FF:000001">
    <property type="entry name" value="L-ribulose-5-phosphate 4-epimerase UlaF"/>
    <property type="match status" value="1"/>
</dbReference>
<dbReference type="Gene3D" id="3.40.225.10">
    <property type="entry name" value="Class II aldolase/adducin N-terminal domain"/>
    <property type="match status" value="1"/>
</dbReference>
<dbReference type="HAMAP" id="MF_01952">
    <property type="entry name" value="UlaF"/>
    <property type="match status" value="1"/>
</dbReference>
<dbReference type="InterPro" id="IPR050197">
    <property type="entry name" value="Aldolase_class_II_sugar_metab"/>
</dbReference>
<dbReference type="InterPro" id="IPR001303">
    <property type="entry name" value="Aldolase_II/adducin_N"/>
</dbReference>
<dbReference type="InterPro" id="IPR036409">
    <property type="entry name" value="Aldolase_II/adducin_N_sf"/>
</dbReference>
<dbReference type="InterPro" id="IPR023499">
    <property type="entry name" value="UlaF"/>
</dbReference>
<dbReference type="NCBIfam" id="NF006047">
    <property type="entry name" value="PRK08193.1"/>
    <property type="match status" value="1"/>
</dbReference>
<dbReference type="NCBIfam" id="NF009003">
    <property type="entry name" value="PRK12348.1"/>
    <property type="match status" value="1"/>
</dbReference>
<dbReference type="PANTHER" id="PTHR22789">
    <property type="entry name" value="FUCULOSE PHOSPHATE ALDOLASE"/>
    <property type="match status" value="1"/>
</dbReference>
<dbReference type="PANTHER" id="PTHR22789:SF9">
    <property type="entry name" value="L-RIBULOSE-5-PHOSPHATE 4-EPIMERASE ULAF"/>
    <property type="match status" value="1"/>
</dbReference>
<dbReference type="Pfam" id="PF00596">
    <property type="entry name" value="Aldolase_II"/>
    <property type="match status" value="1"/>
</dbReference>
<dbReference type="SMART" id="SM01007">
    <property type="entry name" value="Aldolase_II"/>
    <property type="match status" value="1"/>
</dbReference>
<dbReference type="SUPFAM" id="SSF53639">
    <property type="entry name" value="AraD/HMP-PK domain-like"/>
    <property type="match status" value="1"/>
</dbReference>